<reference key="1">
    <citation type="journal article" date="2001" name="Nature">
        <title>Complete genome sequence of Salmonella enterica serovar Typhimurium LT2.</title>
        <authorList>
            <person name="McClelland M."/>
            <person name="Sanderson K.E."/>
            <person name="Spieth J."/>
            <person name="Clifton S.W."/>
            <person name="Latreille P."/>
            <person name="Courtney L."/>
            <person name="Porwollik S."/>
            <person name="Ali J."/>
            <person name="Dante M."/>
            <person name="Du F."/>
            <person name="Hou S."/>
            <person name="Layman D."/>
            <person name="Leonard S."/>
            <person name="Nguyen C."/>
            <person name="Scott K."/>
            <person name="Holmes A."/>
            <person name="Grewal N."/>
            <person name="Mulvaney E."/>
            <person name="Ryan E."/>
            <person name="Sun H."/>
            <person name="Florea L."/>
            <person name="Miller W."/>
            <person name="Stoneking T."/>
            <person name="Nhan M."/>
            <person name="Waterston R."/>
            <person name="Wilson R.K."/>
        </authorList>
    </citation>
    <scope>NUCLEOTIDE SEQUENCE [LARGE SCALE GENOMIC DNA]</scope>
    <source>
        <strain>LT2 / SGSC1412 / ATCC 700720</strain>
    </source>
</reference>
<reference key="2">
    <citation type="submission" date="1998-12" db="EMBL/GenBank/DDBJ databases">
        <title>Cloning and sequencing of apolipoprotein N-acyltransferase from Salmonella typhimurium.</title>
        <authorList>
            <person name="Gupta S.D."/>
            <person name="Rahman A."/>
            <person name="Wu H.C."/>
            <person name="Rick P.D."/>
        </authorList>
    </citation>
    <scope>NUCLEOTIDE SEQUENCE [GENOMIC DNA] OF 1-96</scope>
    <source>
        <strain>LEU485</strain>
    </source>
</reference>
<protein>
    <recommendedName>
        <fullName evidence="1">Glutamate/aspartate import solute-binding protein</fullName>
    </recommendedName>
</protein>
<name>GLTI_SALTY</name>
<organism>
    <name type="scientific">Salmonella typhimurium (strain LT2 / SGSC1412 / ATCC 700720)</name>
    <dbReference type="NCBI Taxonomy" id="99287"/>
    <lineage>
        <taxon>Bacteria</taxon>
        <taxon>Pseudomonadati</taxon>
        <taxon>Pseudomonadota</taxon>
        <taxon>Gammaproteobacteria</taxon>
        <taxon>Enterobacterales</taxon>
        <taxon>Enterobacteriaceae</taxon>
        <taxon>Salmonella</taxon>
    </lineage>
</organism>
<evidence type="ECO:0000250" key="1">
    <source>
        <dbReference type="UniProtKB" id="P37902"/>
    </source>
</evidence>
<evidence type="ECO:0000305" key="2"/>
<dbReference type="EMBL" id="AE006468">
    <property type="protein sequence ID" value="AAL19616.1"/>
    <property type="status" value="ALT_INIT"/>
    <property type="molecule type" value="Genomic_DNA"/>
</dbReference>
<dbReference type="EMBL" id="AF116773">
    <property type="protein sequence ID" value="AAD09825.1"/>
    <property type="status" value="ALT_INIT"/>
    <property type="molecule type" value="Genomic_DNA"/>
</dbReference>
<dbReference type="RefSeq" id="NP_459657.1">
    <property type="nucleotide sequence ID" value="NC_003197.2"/>
</dbReference>
<dbReference type="SMR" id="Q9ZF60"/>
<dbReference type="STRING" id="99287.STM0665"/>
<dbReference type="PaxDb" id="99287-STM0665"/>
<dbReference type="GeneID" id="1252185"/>
<dbReference type="KEGG" id="stm:STM0665"/>
<dbReference type="PATRIC" id="fig|99287.12.peg.701"/>
<dbReference type="HOGENOM" id="CLU_019602_0_0_6"/>
<dbReference type="PhylomeDB" id="Q9ZF60"/>
<dbReference type="Proteomes" id="UP000001014">
    <property type="component" value="Chromosome"/>
</dbReference>
<dbReference type="GO" id="GO:0005576">
    <property type="term" value="C:extracellular region"/>
    <property type="evidence" value="ECO:0000318"/>
    <property type="project" value="GO_Central"/>
</dbReference>
<dbReference type="GO" id="GO:0030288">
    <property type="term" value="C:outer membrane-bounded periplasmic space"/>
    <property type="evidence" value="ECO:0000318"/>
    <property type="project" value="GO_Central"/>
</dbReference>
<dbReference type="GO" id="GO:0006865">
    <property type="term" value="P:amino acid transport"/>
    <property type="evidence" value="ECO:0000318"/>
    <property type="project" value="GO_Central"/>
</dbReference>
<dbReference type="CDD" id="cd13688">
    <property type="entry name" value="PBP2_GltI_DEBP"/>
    <property type="match status" value="1"/>
</dbReference>
<dbReference type="FunFam" id="3.40.190.10:FF:000052">
    <property type="entry name" value="Amino acid ABC transporter substrate-binding protein"/>
    <property type="match status" value="1"/>
</dbReference>
<dbReference type="Gene3D" id="3.40.190.10">
    <property type="entry name" value="Periplasmic binding protein-like II"/>
    <property type="match status" value="2"/>
</dbReference>
<dbReference type="InterPro" id="IPR051455">
    <property type="entry name" value="Bact_solute-bind_prot3"/>
</dbReference>
<dbReference type="InterPro" id="IPR001638">
    <property type="entry name" value="Solute-binding_3/MltF_N"/>
</dbReference>
<dbReference type="NCBIfam" id="NF008063">
    <property type="entry name" value="PRK10797.1"/>
    <property type="match status" value="1"/>
</dbReference>
<dbReference type="PANTHER" id="PTHR30085">
    <property type="entry name" value="AMINO ACID ABC TRANSPORTER PERMEASE"/>
    <property type="match status" value="1"/>
</dbReference>
<dbReference type="PANTHER" id="PTHR30085:SF2">
    <property type="entry name" value="GLUTAMATE_ASPARTATE IMPORT SOLUTE-BINDING PROTEIN"/>
    <property type="match status" value="1"/>
</dbReference>
<dbReference type="Pfam" id="PF00497">
    <property type="entry name" value="SBP_bac_3"/>
    <property type="match status" value="1"/>
</dbReference>
<dbReference type="SMART" id="SM00062">
    <property type="entry name" value="PBPb"/>
    <property type="match status" value="1"/>
</dbReference>
<dbReference type="SUPFAM" id="SSF53850">
    <property type="entry name" value="Periplasmic binding protein-like II"/>
    <property type="match status" value="1"/>
</dbReference>
<proteinExistence type="inferred from homology"/>
<feature type="signal peptide" evidence="1">
    <location>
        <begin position="1"/>
        <end position="22"/>
    </location>
</feature>
<feature type="chain" id="PRO_0000031759" description="Glutamate/aspartate import solute-binding protein">
    <location>
        <begin position="23"/>
        <end position="302"/>
    </location>
</feature>
<comment type="function">
    <text evidence="1">Part of the ABC transporter complex GltIJKL involved in glutamate and aspartate uptake. Binds to both glutamate and aspartate.</text>
</comment>
<comment type="subunit">
    <text evidence="1">The complex is composed of two ATP-binding proteins (GltL), two transmembrane proteins (GltJ and GltK) and a solute-binding protein (GltI).</text>
</comment>
<comment type="subcellular location">
    <subcellularLocation>
        <location evidence="1">Periplasm</location>
    </subcellularLocation>
</comment>
<comment type="similarity">
    <text evidence="2">Belongs to the bacterial solute-binding protein 3 family.</text>
</comment>
<comment type="sequence caution" evidence="2">
    <conflict type="erroneous initiation">
        <sequence resource="EMBL-CDS" id="AAD09825"/>
    </conflict>
</comment>
<comment type="sequence caution" evidence="2">
    <conflict type="erroneous initiation">
        <sequence resource="EMBL-CDS" id="AAL19616"/>
    </conflict>
</comment>
<gene>
    <name type="primary">gltI</name>
    <name type="ordered locus">STM0665</name>
</gene>
<accession>Q9ZF60</accession>
<keyword id="KW-0029">Amino-acid transport</keyword>
<keyword id="KW-0574">Periplasm</keyword>
<keyword id="KW-1185">Reference proteome</keyword>
<keyword id="KW-0732">Signal</keyword>
<keyword id="KW-0813">Transport</keyword>
<sequence>MQLRKLTTAMLVMGLSAGLAHAEDGAPAAGSTLDKIAKNGVIVVGHRESSVPFSYYDNQQKVVGYSQDYSNAIVEAVKKKLNKPDLQVKLIPITSQNRIPLLQNGTFDFECGSTTNNLERQKQAAFSDTIFVVGTRLLTKKGGDIKDFPDLKGKAVVVTSGTTSEILLHKLNEEQKMGMRIISAKDHGDSFRTLESGRAVAFMMDDALLAGERAKAKKPDNWEIVGKPQSQEAYGCMLRKNDPEFKKLMDDTIAQAQTSGEAEKWFDKWFKNPIPPKNLNMNFELSDEMKALFKAPNDKALN</sequence>